<comment type="similarity">
    <text evidence="1">Belongs to the bacterial ribosomal protein bS16 family.</text>
</comment>
<dbReference type="EMBL" id="CP000613">
    <property type="protein sequence ID" value="ACI99594.1"/>
    <property type="molecule type" value="Genomic_DNA"/>
</dbReference>
<dbReference type="RefSeq" id="WP_012567379.1">
    <property type="nucleotide sequence ID" value="NC_011420.2"/>
</dbReference>
<dbReference type="SMR" id="B6IP92"/>
<dbReference type="STRING" id="414684.RC1_2207"/>
<dbReference type="KEGG" id="rce:RC1_2207"/>
<dbReference type="eggNOG" id="COG0228">
    <property type="taxonomic scope" value="Bacteria"/>
</dbReference>
<dbReference type="HOGENOM" id="CLU_100590_3_1_5"/>
<dbReference type="OrthoDB" id="9807878at2"/>
<dbReference type="Proteomes" id="UP000001591">
    <property type="component" value="Chromosome"/>
</dbReference>
<dbReference type="GO" id="GO:0005737">
    <property type="term" value="C:cytoplasm"/>
    <property type="evidence" value="ECO:0007669"/>
    <property type="project" value="UniProtKB-ARBA"/>
</dbReference>
<dbReference type="GO" id="GO:0015935">
    <property type="term" value="C:small ribosomal subunit"/>
    <property type="evidence" value="ECO:0007669"/>
    <property type="project" value="TreeGrafter"/>
</dbReference>
<dbReference type="GO" id="GO:0003735">
    <property type="term" value="F:structural constituent of ribosome"/>
    <property type="evidence" value="ECO:0007669"/>
    <property type="project" value="InterPro"/>
</dbReference>
<dbReference type="GO" id="GO:0006412">
    <property type="term" value="P:translation"/>
    <property type="evidence" value="ECO:0007669"/>
    <property type="project" value="UniProtKB-UniRule"/>
</dbReference>
<dbReference type="Gene3D" id="3.30.1320.10">
    <property type="match status" value="1"/>
</dbReference>
<dbReference type="HAMAP" id="MF_00385">
    <property type="entry name" value="Ribosomal_bS16"/>
    <property type="match status" value="1"/>
</dbReference>
<dbReference type="InterPro" id="IPR000307">
    <property type="entry name" value="Ribosomal_bS16"/>
</dbReference>
<dbReference type="InterPro" id="IPR020592">
    <property type="entry name" value="Ribosomal_bS16_CS"/>
</dbReference>
<dbReference type="InterPro" id="IPR023803">
    <property type="entry name" value="Ribosomal_bS16_dom_sf"/>
</dbReference>
<dbReference type="NCBIfam" id="TIGR00002">
    <property type="entry name" value="S16"/>
    <property type="match status" value="1"/>
</dbReference>
<dbReference type="PANTHER" id="PTHR12919">
    <property type="entry name" value="30S RIBOSOMAL PROTEIN S16"/>
    <property type="match status" value="1"/>
</dbReference>
<dbReference type="PANTHER" id="PTHR12919:SF20">
    <property type="entry name" value="SMALL RIBOSOMAL SUBUNIT PROTEIN BS16M"/>
    <property type="match status" value="1"/>
</dbReference>
<dbReference type="Pfam" id="PF00886">
    <property type="entry name" value="Ribosomal_S16"/>
    <property type="match status" value="1"/>
</dbReference>
<dbReference type="SUPFAM" id="SSF54565">
    <property type="entry name" value="Ribosomal protein S16"/>
    <property type="match status" value="1"/>
</dbReference>
<dbReference type="PROSITE" id="PS00732">
    <property type="entry name" value="RIBOSOMAL_S16"/>
    <property type="match status" value="1"/>
</dbReference>
<name>RS16_RHOCS</name>
<keyword id="KW-1185">Reference proteome</keyword>
<keyword id="KW-0687">Ribonucleoprotein</keyword>
<keyword id="KW-0689">Ribosomal protein</keyword>
<proteinExistence type="inferred from homology"/>
<reference key="1">
    <citation type="submission" date="2007-03" db="EMBL/GenBank/DDBJ databases">
        <title>Genome sequence of Rhodospirillum centenum.</title>
        <authorList>
            <person name="Touchman J.W."/>
            <person name="Bauer C."/>
            <person name="Blankenship R.E."/>
        </authorList>
    </citation>
    <scope>NUCLEOTIDE SEQUENCE [LARGE SCALE GENOMIC DNA]</scope>
    <source>
        <strain>ATCC 51521 / SW</strain>
    </source>
</reference>
<gene>
    <name evidence="1" type="primary">rpsP</name>
    <name type="ordered locus">RC1_2207</name>
</gene>
<evidence type="ECO:0000255" key="1">
    <source>
        <dbReference type="HAMAP-Rule" id="MF_00385"/>
    </source>
</evidence>
<evidence type="ECO:0000256" key="2">
    <source>
        <dbReference type="SAM" id="MobiDB-lite"/>
    </source>
</evidence>
<evidence type="ECO:0000305" key="3"/>
<protein>
    <recommendedName>
        <fullName evidence="1">Small ribosomal subunit protein bS16</fullName>
    </recommendedName>
    <alternativeName>
        <fullName evidence="3">30S ribosomal protein S16</fullName>
    </alternativeName>
</protein>
<accession>B6IP92</accession>
<feature type="chain" id="PRO_1000196464" description="Small ribosomal subunit protein bS16">
    <location>
        <begin position="1"/>
        <end position="109"/>
    </location>
</feature>
<feature type="region of interest" description="Disordered" evidence="2">
    <location>
        <begin position="87"/>
        <end position="109"/>
    </location>
</feature>
<feature type="compositionally biased region" description="Basic and acidic residues" evidence="2">
    <location>
        <begin position="100"/>
        <end position="109"/>
    </location>
</feature>
<organism>
    <name type="scientific">Rhodospirillum centenum (strain ATCC 51521 / SW)</name>
    <dbReference type="NCBI Taxonomy" id="414684"/>
    <lineage>
        <taxon>Bacteria</taxon>
        <taxon>Pseudomonadati</taxon>
        <taxon>Pseudomonadota</taxon>
        <taxon>Alphaproteobacteria</taxon>
        <taxon>Rhodospirillales</taxon>
        <taxon>Rhodospirillaceae</taxon>
        <taxon>Rhodospirillum</taxon>
    </lineage>
</organism>
<sequence>MSVKIRLSRGGAKKRPFYSIVVANSRAPRDGDFIEKVGTYNPMVPHDHPERVVLQEDRIKEWLAKGAQPTDRVARFLGKANLIPMPALRETPKKSAPKAKAQERAKAAG</sequence>